<dbReference type="EC" id="2.3.1.129" evidence="1"/>
<dbReference type="EMBL" id="CP001099">
    <property type="protein sequence ID" value="ACF10658.1"/>
    <property type="molecule type" value="Genomic_DNA"/>
</dbReference>
<dbReference type="RefSeq" id="WP_012501492.1">
    <property type="nucleotide sequence ID" value="NC_011027.1"/>
</dbReference>
<dbReference type="SMR" id="B3QR04"/>
<dbReference type="STRING" id="517417.Cpar_0231"/>
<dbReference type="KEGG" id="cpc:Cpar_0231"/>
<dbReference type="eggNOG" id="COG1043">
    <property type="taxonomic scope" value="Bacteria"/>
</dbReference>
<dbReference type="HOGENOM" id="CLU_061249_0_0_10"/>
<dbReference type="OrthoDB" id="9807278at2"/>
<dbReference type="UniPathway" id="UPA00359">
    <property type="reaction ID" value="UER00477"/>
</dbReference>
<dbReference type="Proteomes" id="UP000008811">
    <property type="component" value="Chromosome"/>
</dbReference>
<dbReference type="GO" id="GO:0005737">
    <property type="term" value="C:cytoplasm"/>
    <property type="evidence" value="ECO:0007669"/>
    <property type="project" value="UniProtKB-SubCell"/>
</dbReference>
<dbReference type="GO" id="GO:0016020">
    <property type="term" value="C:membrane"/>
    <property type="evidence" value="ECO:0007669"/>
    <property type="project" value="GOC"/>
</dbReference>
<dbReference type="GO" id="GO:0008780">
    <property type="term" value="F:acyl-[acyl-carrier-protein]-UDP-N-acetylglucosamine O-acyltransferase activity"/>
    <property type="evidence" value="ECO:0007669"/>
    <property type="project" value="UniProtKB-UniRule"/>
</dbReference>
<dbReference type="GO" id="GO:0009245">
    <property type="term" value="P:lipid A biosynthetic process"/>
    <property type="evidence" value="ECO:0007669"/>
    <property type="project" value="UniProtKB-UniRule"/>
</dbReference>
<dbReference type="CDD" id="cd03351">
    <property type="entry name" value="LbH_UDP-GlcNAc_AT"/>
    <property type="match status" value="1"/>
</dbReference>
<dbReference type="Gene3D" id="2.160.10.10">
    <property type="entry name" value="Hexapeptide repeat proteins"/>
    <property type="match status" value="1"/>
</dbReference>
<dbReference type="Gene3D" id="1.20.1180.10">
    <property type="entry name" value="Udp N-acetylglucosamine O-acyltransferase, C-terminal domain"/>
    <property type="match status" value="1"/>
</dbReference>
<dbReference type="HAMAP" id="MF_00387">
    <property type="entry name" value="LpxA"/>
    <property type="match status" value="1"/>
</dbReference>
<dbReference type="InterPro" id="IPR029098">
    <property type="entry name" value="Acetyltransf_C"/>
</dbReference>
<dbReference type="InterPro" id="IPR037157">
    <property type="entry name" value="Acetyltransf_C_sf"/>
</dbReference>
<dbReference type="InterPro" id="IPR001451">
    <property type="entry name" value="Hexapep"/>
</dbReference>
<dbReference type="InterPro" id="IPR010137">
    <property type="entry name" value="Lipid_A_LpxA"/>
</dbReference>
<dbReference type="InterPro" id="IPR011004">
    <property type="entry name" value="Trimer_LpxA-like_sf"/>
</dbReference>
<dbReference type="NCBIfam" id="TIGR01852">
    <property type="entry name" value="lipid_A_lpxA"/>
    <property type="match status" value="1"/>
</dbReference>
<dbReference type="NCBIfam" id="NF003657">
    <property type="entry name" value="PRK05289.1"/>
    <property type="match status" value="1"/>
</dbReference>
<dbReference type="PANTHER" id="PTHR43480">
    <property type="entry name" value="ACYL-[ACYL-CARRIER-PROTEIN]--UDP-N-ACETYLGLUCOSAMINE O-ACYLTRANSFERASE"/>
    <property type="match status" value="1"/>
</dbReference>
<dbReference type="PANTHER" id="PTHR43480:SF1">
    <property type="entry name" value="ACYL-[ACYL-CARRIER-PROTEIN]--UDP-N-ACETYLGLUCOSAMINE O-ACYLTRANSFERASE, MITOCHONDRIAL-RELATED"/>
    <property type="match status" value="1"/>
</dbReference>
<dbReference type="Pfam" id="PF13720">
    <property type="entry name" value="Acetyltransf_11"/>
    <property type="match status" value="1"/>
</dbReference>
<dbReference type="Pfam" id="PF00132">
    <property type="entry name" value="Hexapep"/>
    <property type="match status" value="2"/>
</dbReference>
<dbReference type="PIRSF" id="PIRSF000456">
    <property type="entry name" value="UDP-GlcNAc_acltr"/>
    <property type="match status" value="1"/>
</dbReference>
<dbReference type="SUPFAM" id="SSF51161">
    <property type="entry name" value="Trimeric LpxA-like enzymes"/>
    <property type="match status" value="1"/>
</dbReference>
<name>LPXA_CHLP8</name>
<sequence>MSSIHPTAVIGSGATIGEDVQIGPYTVIDDDVVIGDRTVIAPHVYIADGARIGSECRIHSGAVLSTAPQDLKYAGEKTELYVGDRTVIRECVTLNRGTKASGKTVVGSDNLLMAYVHAGHDCVIGNHVVIANSVQFGGHCEVGDYVVVGGLAGIHQFVRIGRYAMVGGISRGALDVPPFVMAGGHNSFRYEGLNVIGLKRRGFTSEQISTIRDVYRVIFQSGLLLSNALEAVRRDFEQTPEVKEILGFFASGAHGRKFLKPFNS</sequence>
<proteinExistence type="inferred from homology"/>
<keyword id="KW-0012">Acyltransferase</keyword>
<keyword id="KW-0963">Cytoplasm</keyword>
<keyword id="KW-0441">Lipid A biosynthesis</keyword>
<keyword id="KW-0444">Lipid biosynthesis</keyword>
<keyword id="KW-0443">Lipid metabolism</keyword>
<keyword id="KW-0677">Repeat</keyword>
<keyword id="KW-0808">Transferase</keyword>
<feature type="chain" id="PRO_1000122693" description="Acyl-[acyl-carrier-protein]--UDP-N-acetylglucosamine O-acyltransferase">
    <location>
        <begin position="1"/>
        <end position="264"/>
    </location>
</feature>
<reference key="1">
    <citation type="submission" date="2008-06" db="EMBL/GenBank/DDBJ databases">
        <title>Complete sequence of Chlorobaculum parvum NCIB 8327.</title>
        <authorList>
            <consortium name="US DOE Joint Genome Institute"/>
            <person name="Lucas S."/>
            <person name="Copeland A."/>
            <person name="Lapidus A."/>
            <person name="Glavina del Rio T."/>
            <person name="Dalin E."/>
            <person name="Tice H."/>
            <person name="Bruce D."/>
            <person name="Goodwin L."/>
            <person name="Pitluck S."/>
            <person name="Schmutz J."/>
            <person name="Larimer F."/>
            <person name="Land M."/>
            <person name="Hauser L."/>
            <person name="Kyrpides N."/>
            <person name="Mikhailova N."/>
            <person name="Zhao F."/>
            <person name="Li T."/>
            <person name="Liu Z."/>
            <person name="Overmann J."/>
            <person name="Bryant D.A."/>
            <person name="Richardson P."/>
        </authorList>
    </citation>
    <scope>NUCLEOTIDE SEQUENCE [LARGE SCALE GENOMIC DNA]</scope>
    <source>
        <strain>DSM 263 / NCIMB 8327</strain>
    </source>
</reference>
<comment type="function">
    <text evidence="1">Involved in the biosynthesis of lipid A, a phosphorylated glycolipid that anchors the lipopolysaccharide to the outer membrane of the cell.</text>
</comment>
<comment type="catalytic activity">
    <reaction evidence="1">
        <text>a (3R)-hydroxyacyl-[ACP] + UDP-N-acetyl-alpha-D-glucosamine = a UDP-3-O-[(3R)-3-hydroxyacyl]-N-acetyl-alpha-D-glucosamine + holo-[ACP]</text>
        <dbReference type="Rhea" id="RHEA:67812"/>
        <dbReference type="Rhea" id="RHEA-COMP:9685"/>
        <dbReference type="Rhea" id="RHEA-COMP:9945"/>
        <dbReference type="ChEBI" id="CHEBI:57705"/>
        <dbReference type="ChEBI" id="CHEBI:64479"/>
        <dbReference type="ChEBI" id="CHEBI:78827"/>
        <dbReference type="ChEBI" id="CHEBI:173225"/>
        <dbReference type="EC" id="2.3.1.129"/>
    </reaction>
</comment>
<comment type="pathway">
    <text evidence="1">Glycolipid biosynthesis; lipid IV(A) biosynthesis; lipid IV(A) from (3R)-3-hydroxytetradecanoyl-[acyl-carrier-protein] and UDP-N-acetyl-alpha-D-glucosamine: step 1/6.</text>
</comment>
<comment type="subunit">
    <text evidence="1">Homotrimer.</text>
</comment>
<comment type="subcellular location">
    <subcellularLocation>
        <location evidence="1">Cytoplasm</location>
    </subcellularLocation>
</comment>
<comment type="similarity">
    <text evidence="1">Belongs to the transferase hexapeptide repeat family. LpxA subfamily.</text>
</comment>
<organism>
    <name type="scientific">Chlorobaculum parvum (strain DSM 263 / NCIMB 8327)</name>
    <name type="common">Chlorobium vibrioforme subsp. thiosulfatophilum</name>
    <dbReference type="NCBI Taxonomy" id="517417"/>
    <lineage>
        <taxon>Bacteria</taxon>
        <taxon>Pseudomonadati</taxon>
        <taxon>Chlorobiota</taxon>
        <taxon>Chlorobiia</taxon>
        <taxon>Chlorobiales</taxon>
        <taxon>Chlorobiaceae</taxon>
        <taxon>Chlorobaculum</taxon>
    </lineage>
</organism>
<accession>B3QR04</accession>
<protein>
    <recommendedName>
        <fullName evidence="1">Acyl-[acyl-carrier-protein]--UDP-N-acetylglucosamine O-acyltransferase</fullName>
        <shortName evidence="1">UDP-N-acetylglucosamine acyltransferase</shortName>
        <ecNumber evidence="1">2.3.1.129</ecNumber>
    </recommendedName>
</protein>
<gene>
    <name evidence="1" type="primary">lpxA</name>
    <name type="ordered locus">Cpar_0231</name>
</gene>
<evidence type="ECO:0000255" key="1">
    <source>
        <dbReference type="HAMAP-Rule" id="MF_00387"/>
    </source>
</evidence>